<keyword id="KW-0175">Coiled coil</keyword>
<keyword id="KW-0217">Developmental protein</keyword>
<keyword id="KW-0256">Endoplasmic reticulum</keyword>
<keyword id="KW-0472">Membrane</keyword>
<keyword id="KW-1185">Reference proteome</keyword>
<keyword id="KW-0732">Signal</keyword>
<keyword id="KW-0812">Transmembrane</keyword>
<keyword id="KW-1133">Transmembrane helix</keyword>
<name>TMEDE_DROME</name>
<proteinExistence type="evidence at transcript level"/>
<comment type="function">
    <text evidence="4 5">Eca and bai are essential, though not redundant, for dorsoventral patterning of the embryo. Specifically required during early embryogenesis for the activity of maternal tkv, while the zygotic tkv is not affected. Involved in Golgi organization.</text>
</comment>
<comment type="subcellular location">
    <subcellularLocation>
        <location evidence="1">Endoplasmic reticulum membrane</location>
        <topology evidence="1">Single-pass type I membrane protein</topology>
    </subcellularLocation>
</comment>
<comment type="developmental stage">
    <text evidence="4">Expressed both maternally and zygotically.</text>
</comment>
<comment type="disruption phenotype">
    <text evidence="4">Mutant embryos exhibit reduced dpp signaling during early embryogenesis. Maternal tkv is not active and is not secreted.</text>
</comment>
<comment type="similarity">
    <text evidence="1">Belongs to the EMP24/GP25L family.</text>
</comment>
<organism>
    <name type="scientific">Drosophila melanogaster</name>
    <name type="common">Fruit fly</name>
    <dbReference type="NCBI Taxonomy" id="7227"/>
    <lineage>
        <taxon>Eukaryota</taxon>
        <taxon>Metazoa</taxon>
        <taxon>Ecdysozoa</taxon>
        <taxon>Arthropoda</taxon>
        <taxon>Hexapoda</taxon>
        <taxon>Insecta</taxon>
        <taxon>Pterygota</taxon>
        <taxon>Neoptera</taxon>
        <taxon>Endopterygota</taxon>
        <taxon>Diptera</taxon>
        <taxon>Brachycera</taxon>
        <taxon>Muscomorpha</taxon>
        <taxon>Ephydroidea</taxon>
        <taxon>Drosophilidae</taxon>
        <taxon>Drosophila</taxon>
        <taxon>Sophophora</taxon>
    </lineage>
</organism>
<dbReference type="EMBL" id="AE014297">
    <property type="protein sequence ID" value="AAG22137.2"/>
    <property type="molecule type" value="Genomic_DNA"/>
</dbReference>
<dbReference type="EMBL" id="AY051693">
    <property type="protein sequence ID" value="AAK93117.1"/>
    <property type="molecule type" value="mRNA"/>
</dbReference>
<dbReference type="RefSeq" id="NP_788616.1">
    <property type="nucleotide sequence ID" value="NM_176439.3"/>
</dbReference>
<dbReference type="SMR" id="Q9I7K5"/>
<dbReference type="BioGRID" id="66336">
    <property type="interactions" value="7"/>
</dbReference>
<dbReference type="FunCoup" id="Q9I7K5">
    <property type="interactions" value="1167"/>
</dbReference>
<dbReference type="IntAct" id="Q9I7K5">
    <property type="interactions" value="1"/>
</dbReference>
<dbReference type="STRING" id="7227.FBpp0081576"/>
<dbReference type="TCDB" id="9.B.188.1.5">
    <property type="family name" value="the transmembrane emp24 domain-containing protein (tmed) family"/>
</dbReference>
<dbReference type="PaxDb" id="7227-FBpp0081576"/>
<dbReference type="DNASU" id="41177"/>
<dbReference type="EnsemblMetazoa" id="FBtr0082098">
    <property type="protein sequence ID" value="FBpp0081576"/>
    <property type="gene ID" value="FBgn0069242"/>
</dbReference>
<dbReference type="GeneID" id="41177"/>
<dbReference type="KEGG" id="dme:Dmel_CG33104"/>
<dbReference type="UCSC" id="CG33104-RA">
    <property type="organism name" value="d. melanogaster"/>
</dbReference>
<dbReference type="AGR" id="FB:FBgn0069242"/>
<dbReference type="CTD" id="41177"/>
<dbReference type="FlyBase" id="FBgn0069242">
    <property type="gene designation" value="eca"/>
</dbReference>
<dbReference type="VEuPathDB" id="VectorBase:FBgn0069242"/>
<dbReference type="eggNOG" id="KOG1690">
    <property type="taxonomic scope" value="Eukaryota"/>
</dbReference>
<dbReference type="GeneTree" id="ENSGT00940000159012"/>
<dbReference type="HOGENOM" id="CLU_066963_2_2_1"/>
<dbReference type="InParanoid" id="Q9I7K5"/>
<dbReference type="OMA" id="GATCAWQ"/>
<dbReference type="OrthoDB" id="3427at2759"/>
<dbReference type="PhylomeDB" id="Q9I7K5"/>
<dbReference type="BioGRID-ORCS" id="41177">
    <property type="hits" value="0 hits in 3 CRISPR screens"/>
</dbReference>
<dbReference type="GenomeRNAi" id="41177"/>
<dbReference type="PRO" id="PR:Q9I7K5"/>
<dbReference type="Proteomes" id="UP000000803">
    <property type="component" value="Chromosome 3R"/>
</dbReference>
<dbReference type="Bgee" id="FBgn0069242">
    <property type="expression patterns" value="Expressed in spermathecum and 216 other cell types or tissues"/>
</dbReference>
<dbReference type="GO" id="GO:0030134">
    <property type="term" value="C:COPII-coated ER to Golgi transport vesicle"/>
    <property type="evidence" value="ECO:0000318"/>
    <property type="project" value="GO_Central"/>
</dbReference>
<dbReference type="GO" id="GO:0012505">
    <property type="term" value="C:endomembrane system"/>
    <property type="evidence" value="ECO:0007005"/>
    <property type="project" value="FlyBase"/>
</dbReference>
<dbReference type="GO" id="GO:0005783">
    <property type="term" value="C:endoplasmic reticulum"/>
    <property type="evidence" value="ECO:0000318"/>
    <property type="project" value="GO_Central"/>
</dbReference>
<dbReference type="GO" id="GO:0005789">
    <property type="term" value="C:endoplasmic reticulum membrane"/>
    <property type="evidence" value="ECO:0007669"/>
    <property type="project" value="UniProtKB-SubCell"/>
</dbReference>
<dbReference type="GO" id="GO:0005793">
    <property type="term" value="C:endoplasmic reticulum-Golgi intermediate compartment"/>
    <property type="evidence" value="ECO:0000318"/>
    <property type="project" value="GO_Central"/>
</dbReference>
<dbReference type="GO" id="GO:0005794">
    <property type="term" value="C:Golgi apparatus"/>
    <property type="evidence" value="ECO:0000318"/>
    <property type="project" value="GO_Central"/>
</dbReference>
<dbReference type="GO" id="GO:0016020">
    <property type="term" value="C:membrane"/>
    <property type="evidence" value="ECO:0000255"/>
    <property type="project" value="FlyBase"/>
</dbReference>
<dbReference type="GO" id="GO:0038024">
    <property type="term" value="F:cargo receptor activity"/>
    <property type="evidence" value="ECO:0000255"/>
    <property type="project" value="FlyBase"/>
</dbReference>
<dbReference type="GO" id="GO:0009953">
    <property type="term" value="P:dorsal/ventral pattern formation"/>
    <property type="evidence" value="ECO:0000315"/>
    <property type="project" value="UniProtKB"/>
</dbReference>
<dbReference type="GO" id="GO:0006888">
    <property type="term" value="P:endoplasmic reticulum to Golgi vesicle-mediated transport"/>
    <property type="evidence" value="ECO:0000315"/>
    <property type="project" value="FlyBase"/>
</dbReference>
<dbReference type="GO" id="GO:0007030">
    <property type="term" value="P:Golgi organization"/>
    <property type="evidence" value="ECO:0000318"/>
    <property type="project" value="GO_Central"/>
</dbReference>
<dbReference type="GO" id="GO:0048193">
    <property type="term" value="P:Golgi vesicle transport"/>
    <property type="evidence" value="ECO:0000255"/>
    <property type="project" value="FlyBase"/>
</dbReference>
<dbReference type="GO" id="GO:0006886">
    <property type="term" value="P:intracellular protein transport"/>
    <property type="evidence" value="ECO:0000318"/>
    <property type="project" value="GO_Central"/>
</dbReference>
<dbReference type="GO" id="GO:0035220">
    <property type="term" value="P:wing disc development"/>
    <property type="evidence" value="ECO:0000315"/>
    <property type="project" value="FlyBase"/>
</dbReference>
<dbReference type="InterPro" id="IPR015720">
    <property type="entry name" value="Emp24-like"/>
</dbReference>
<dbReference type="InterPro" id="IPR009038">
    <property type="entry name" value="GOLD_dom"/>
</dbReference>
<dbReference type="PANTHER" id="PTHR22811">
    <property type="entry name" value="TRANSMEMBRANE EMP24 DOMAIN-CONTAINING PROTEIN"/>
    <property type="match status" value="1"/>
</dbReference>
<dbReference type="Pfam" id="PF01105">
    <property type="entry name" value="EMP24_GP25L"/>
    <property type="match status" value="1"/>
</dbReference>
<dbReference type="SMART" id="SM01190">
    <property type="entry name" value="EMP24_GP25L"/>
    <property type="match status" value="1"/>
</dbReference>
<dbReference type="PROSITE" id="PS50866">
    <property type="entry name" value="GOLD"/>
    <property type="match status" value="1"/>
</dbReference>
<gene>
    <name evidence="7 9" type="primary">eca</name>
    <name type="ORF">CG33104</name>
</gene>
<sequence length="216" mass="25159">MRDQFISLALILCVLHSACGLYFHISETERKCFIEEVPDETTVIVNYKVELYDPRSNGFMPSSPGIGMHVEVRDSDDKIVLSRVYSSQGRISFTSHTPGEHVICMFSNSTAWFSGAQLRVHLDIQVGEHAIDYAHVAQKEKLTELQLRIRQLLDQVEQITKEQNYQRYREERFRHTSESTNSRVLWWSLAQTVVLVCMGFWQMRHLKSFFEAKKLV</sequence>
<accession>Q9I7K5</accession>
<accession>Q961C1</accession>
<evidence type="ECO:0000255" key="1"/>
<evidence type="ECO:0000255" key="2">
    <source>
        <dbReference type="PROSITE-ProRule" id="PRU00096"/>
    </source>
</evidence>
<evidence type="ECO:0000269" key="3">
    <source>
    </source>
</evidence>
<evidence type="ECO:0000269" key="4">
    <source>
    </source>
</evidence>
<evidence type="ECO:0000269" key="5">
    <source>
    </source>
</evidence>
<evidence type="ECO:0000305" key="6"/>
<evidence type="ECO:0000312" key="7">
    <source>
        <dbReference type="EMBL" id="AAG22137.2"/>
    </source>
</evidence>
<evidence type="ECO:0000312" key="8">
    <source>
        <dbReference type="EMBL" id="AAK93117.1"/>
    </source>
</evidence>
<evidence type="ECO:0000312" key="9">
    <source>
        <dbReference type="FlyBase" id="FBgn0069242"/>
    </source>
</evidence>
<reference evidence="7" key="1">
    <citation type="journal article" date="2000" name="Science">
        <title>The genome sequence of Drosophila melanogaster.</title>
        <authorList>
            <person name="Adams M.D."/>
            <person name="Celniker S.E."/>
            <person name="Holt R.A."/>
            <person name="Evans C.A."/>
            <person name="Gocayne J.D."/>
            <person name="Amanatides P.G."/>
            <person name="Scherer S.E."/>
            <person name="Li P.W."/>
            <person name="Hoskins R.A."/>
            <person name="Galle R.F."/>
            <person name="George R.A."/>
            <person name="Lewis S.E."/>
            <person name="Richards S."/>
            <person name="Ashburner M."/>
            <person name="Henderson S.N."/>
            <person name="Sutton G.G."/>
            <person name="Wortman J.R."/>
            <person name="Yandell M.D."/>
            <person name="Zhang Q."/>
            <person name="Chen L.X."/>
            <person name="Brandon R.C."/>
            <person name="Rogers Y.-H.C."/>
            <person name="Blazej R.G."/>
            <person name="Champe M."/>
            <person name="Pfeiffer B.D."/>
            <person name="Wan K.H."/>
            <person name="Doyle C."/>
            <person name="Baxter E.G."/>
            <person name="Helt G."/>
            <person name="Nelson C.R."/>
            <person name="Miklos G.L.G."/>
            <person name="Abril J.F."/>
            <person name="Agbayani A."/>
            <person name="An H.-J."/>
            <person name="Andrews-Pfannkoch C."/>
            <person name="Baldwin D."/>
            <person name="Ballew R.M."/>
            <person name="Basu A."/>
            <person name="Baxendale J."/>
            <person name="Bayraktaroglu L."/>
            <person name="Beasley E.M."/>
            <person name="Beeson K.Y."/>
            <person name="Benos P.V."/>
            <person name="Berman B.P."/>
            <person name="Bhandari D."/>
            <person name="Bolshakov S."/>
            <person name="Borkova D."/>
            <person name="Botchan M.R."/>
            <person name="Bouck J."/>
            <person name="Brokstein P."/>
            <person name="Brottier P."/>
            <person name="Burtis K.C."/>
            <person name="Busam D.A."/>
            <person name="Butler H."/>
            <person name="Cadieu E."/>
            <person name="Center A."/>
            <person name="Chandra I."/>
            <person name="Cherry J.M."/>
            <person name="Cawley S."/>
            <person name="Dahlke C."/>
            <person name="Davenport L.B."/>
            <person name="Davies P."/>
            <person name="de Pablos B."/>
            <person name="Delcher A."/>
            <person name="Deng Z."/>
            <person name="Mays A.D."/>
            <person name="Dew I."/>
            <person name="Dietz S.M."/>
            <person name="Dodson K."/>
            <person name="Doup L.E."/>
            <person name="Downes M."/>
            <person name="Dugan-Rocha S."/>
            <person name="Dunkov B.C."/>
            <person name="Dunn P."/>
            <person name="Durbin K.J."/>
            <person name="Evangelista C.C."/>
            <person name="Ferraz C."/>
            <person name="Ferriera S."/>
            <person name="Fleischmann W."/>
            <person name="Fosler C."/>
            <person name="Gabrielian A.E."/>
            <person name="Garg N.S."/>
            <person name="Gelbart W.M."/>
            <person name="Glasser K."/>
            <person name="Glodek A."/>
            <person name="Gong F."/>
            <person name="Gorrell J.H."/>
            <person name="Gu Z."/>
            <person name="Guan P."/>
            <person name="Harris M."/>
            <person name="Harris N.L."/>
            <person name="Harvey D.A."/>
            <person name="Heiman T.J."/>
            <person name="Hernandez J.R."/>
            <person name="Houck J."/>
            <person name="Hostin D."/>
            <person name="Houston K.A."/>
            <person name="Howland T.J."/>
            <person name="Wei M.-H."/>
            <person name="Ibegwam C."/>
            <person name="Jalali M."/>
            <person name="Kalush F."/>
            <person name="Karpen G.H."/>
            <person name="Ke Z."/>
            <person name="Kennison J.A."/>
            <person name="Ketchum K.A."/>
            <person name="Kimmel B.E."/>
            <person name="Kodira C.D."/>
            <person name="Kraft C.L."/>
            <person name="Kravitz S."/>
            <person name="Kulp D."/>
            <person name="Lai Z."/>
            <person name="Lasko P."/>
            <person name="Lei Y."/>
            <person name="Levitsky A.A."/>
            <person name="Li J.H."/>
            <person name="Li Z."/>
            <person name="Liang Y."/>
            <person name="Lin X."/>
            <person name="Liu X."/>
            <person name="Mattei B."/>
            <person name="McIntosh T.C."/>
            <person name="McLeod M.P."/>
            <person name="McPherson D."/>
            <person name="Merkulov G."/>
            <person name="Milshina N.V."/>
            <person name="Mobarry C."/>
            <person name="Morris J."/>
            <person name="Moshrefi A."/>
            <person name="Mount S.M."/>
            <person name="Moy M."/>
            <person name="Murphy B."/>
            <person name="Murphy L."/>
            <person name="Muzny D.M."/>
            <person name="Nelson D.L."/>
            <person name="Nelson D.R."/>
            <person name="Nelson K.A."/>
            <person name="Nixon K."/>
            <person name="Nusskern D.R."/>
            <person name="Pacleb J.M."/>
            <person name="Palazzolo M."/>
            <person name="Pittman G.S."/>
            <person name="Pan S."/>
            <person name="Pollard J."/>
            <person name="Puri V."/>
            <person name="Reese M.G."/>
            <person name="Reinert K."/>
            <person name="Remington K."/>
            <person name="Saunders R.D.C."/>
            <person name="Scheeler F."/>
            <person name="Shen H."/>
            <person name="Shue B.C."/>
            <person name="Siden-Kiamos I."/>
            <person name="Simpson M."/>
            <person name="Skupski M.P."/>
            <person name="Smith T.J."/>
            <person name="Spier E."/>
            <person name="Spradling A.C."/>
            <person name="Stapleton M."/>
            <person name="Strong R."/>
            <person name="Sun E."/>
            <person name="Svirskas R."/>
            <person name="Tector C."/>
            <person name="Turner R."/>
            <person name="Venter E."/>
            <person name="Wang A.H."/>
            <person name="Wang X."/>
            <person name="Wang Z.-Y."/>
            <person name="Wassarman D.A."/>
            <person name="Weinstock G.M."/>
            <person name="Weissenbach J."/>
            <person name="Williams S.M."/>
            <person name="Woodage T."/>
            <person name="Worley K.C."/>
            <person name="Wu D."/>
            <person name="Yang S."/>
            <person name="Yao Q.A."/>
            <person name="Ye J."/>
            <person name="Yeh R.-F."/>
            <person name="Zaveri J.S."/>
            <person name="Zhan M."/>
            <person name="Zhang G."/>
            <person name="Zhao Q."/>
            <person name="Zheng L."/>
            <person name="Zheng X.H."/>
            <person name="Zhong F.N."/>
            <person name="Zhong W."/>
            <person name="Zhou X."/>
            <person name="Zhu S.C."/>
            <person name="Zhu X."/>
            <person name="Smith H.O."/>
            <person name="Gibbs R.A."/>
            <person name="Myers E.W."/>
            <person name="Rubin G.M."/>
            <person name="Venter J.C."/>
        </authorList>
    </citation>
    <scope>NUCLEOTIDE SEQUENCE [LARGE SCALE GENOMIC DNA]</scope>
    <source>
        <strain>Berkeley</strain>
    </source>
</reference>
<reference evidence="6 7" key="2">
    <citation type="journal article" date="2002" name="Genome Biol.">
        <title>Annotation of the Drosophila melanogaster euchromatic genome: a systematic review.</title>
        <authorList>
            <person name="Misra S."/>
            <person name="Crosby M.A."/>
            <person name="Mungall C.J."/>
            <person name="Matthews B.B."/>
            <person name="Campbell K.S."/>
            <person name="Hradecky P."/>
            <person name="Huang Y."/>
            <person name="Kaminker J.S."/>
            <person name="Millburn G.H."/>
            <person name="Prochnik S.E."/>
            <person name="Smith C.D."/>
            <person name="Tupy J.L."/>
            <person name="Whitfield E.J."/>
            <person name="Bayraktaroglu L."/>
            <person name="Berman B.P."/>
            <person name="Bettencourt B.R."/>
            <person name="Celniker S.E."/>
            <person name="de Grey A.D.N.J."/>
            <person name="Drysdale R.A."/>
            <person name="Harris N.L."/>
            <person name="Richter J."/>
            <person name="Russo S."/>
            <person name="Schroeder A.J."/>
            <person name="Shu S.Q."/>
            <person name="Stapleton M."/>
            <person name="Yamada C."/>
            <person name="Ashburner M."/>
            <person name="Gelbart W.M."/>
            <person name="Rubin G.M."/>
            <person name="Lewis S.E."/>
        </authorList>
    </citation>
    <scope>GENOME REANNOTATION</scope>
    <source>
        <strain>Berkeley</strain>
    </source>
</reference>
<reference evidence="8" key="3">
    <citation type="journal article" date="2002" name="Genome Biol.">
        <title>A Drosophila full-length cDNA resource.</title>
        <authorList>
            <person name="Stapleton M."/>
            <person name="Carlson J.W."/>
            <person name="Brokstein P."/>
            <person name="Yu C."/>
            <person name="Champe M."/>
            <person name="George R.A."/>
            <person name="Guarin H."/>
            <person name="Kronmiller B."/>
            <person name="Pacleb J.M."/>
            <person name="Park S."/>
            <person name="Wan K.H."/>
            <person name="Rubin G.M."/>
            <person name="Celniker S.E."/>
        </authorList>
    </citation>
    <scope>NUCLEOTIDE SEQUENCE [LARGE SCALE MRNA]</scope>
    <source>
        <strain evidence="8">Berkeley</strain>
        <tissue evidence="3">Embryo</tissue>
    </source>
</reference>
<reference evidence="6" key="4">
    <citation type="journal article" date="2004" name="Mech. Dev.">
        <title>Drosophila p24 homologues eclair and baiser are necessary for the activity of the maternally expressed Tkv receptor during early embryogenesis.</title>
        <authorList>
            <person name="Bartoszewski S."/>
            <person name="Luschnig S."/>
            <person name="Desjeux I."/>
            <person name="Grosshans J."/>
            <person name="Nusslein-Volhard C."/>
        </authorList>
    </citation>
    <scope>FUNCTION</scope>
    <scope>DEVELOPMENTAL STAGE</scope>
    <scope>DISRUPTION PHENOTYPE</scope>
</reference>
<reference key="5">
    <citation type="journal article" date="2011" name="PLoS ONE">
        <title>Identification of ER proteins involved in the functional organisation of the early secretory pathway in Drosophila cells by a targeted RNAi screen.</title>
        <authorList>
            <person name="Kondylis V."/>
            <person name="Tang Y."/>
            <person name="Fuchs F."/>
            <person name="Boutros M."/>
            <person name="Rabouille C."/>
        </authorList>
    </citation>
    <scope>FUNCTION</scope>
</reference>
<protein>
    <recommendedName>
        <fullName>Transmembrane emp24 domain-containing protein eca</fullName>
    </recommendedName>
    <alternativeName>
        <fullName evidence="7">Protein eclair</fullName>
    </alternativeName>
</protein>
<feature type="signal peptide" evidence="1">
    <location>
        <begin position="1"/>
        <end position="20"/>
    </location>
</feature>
<feature type="chain" id="PRO_0000393927" description="Transmembrane emp24 domain-containing protein eca" evidence="1">
    <location>
        <begin position="21"/>
        <end position="216"/>
    </location>
</feature>
<feature type="topological domain" description="Lumenal" evidence="1">
    <location>
        <begin position="21"/>
        <end position="182"/>
    </location>
</feature>
<feature type="transmembrane region" description="Helical" evidence="1">
    <location>
        <begin position="183"/>
        <end position="203"/>
    </location>
</feature>
<feature type="topological domain" description="Cytoplasmic" evidence="1">
    <location>
        <begin position="204"/>
        <end position="216"/>
    </location>
</feature>
<feature type="domain" description="GOLD" evidence="2">
    <location>
        <begin position="30"/>
        <end position="126"/>
    </location>
</feature>
<feature type="coiled-coil region" evidence="1">
    <location>
        <begin position="134"/>
        <end position="164"/>
    </location>
</feature>
<feature type="short sequence motif" description="Prevents secretion from ER" evidence="1">
    <location>
        <begin position="213"/>
        <end position="216"/>
    </location>
</feature>